<feature type="chain" id="PRO_1000047956" description="Protein RecA">
    <location>
        <begin position="1"/>
        <end position="350"/>
    </location>
</feature>
<feature type="binding site" evidence="1">
    <location>
        <begin position="66"/>
        <end position="73"/>
    </location>
    <ligand>
        <name>ATP</name>
        <dbReference type="ChEBI" id="CHEBI:30616"/>
    </ligand>
</feature>
<accession>A1SJ61</accession>
<keyword id="KW-0067">ATP-binding</keyword>
<keyword id="KW-0963">Cytoplasm</keyword>
<keyword id="KW-0227">DNA damage</keyword>
<keyword id="KW-0233">DNA recombination</keyword>
<keyword id="KW-0234">DNA repair</keyword>
<keyword id="KW-0238">DNA-binding</keyword>
<keyword id="KW-0547">Nucleotide-binding</keyword>
<keyword id="KW-1185">Reference proteome</keyword>
<keyword id="KW-0742">SOS response</keyword>
<name>RECA_NOCSJ</name>
<protein>
    <recommendedName>
        <fullName evidence="1">Protein RecA</fullName>
    </recommendedName>
    <alternativeName>
        <fullName evidence="1">Recombinase A</fullName>
    </alternativeName>
</protein>
<reference key="1">
    <citation type="submission" date="2006-12" db="EMBL/GenBank/DDBJ databases">
        <title>Complete sequence of chromosome 1 of Nocardioides sp. JS614.</title>
        <authorList>
            <person name="Copeland A."/>
            <person name="Lucas S."/>
            <person name="Lapidus A."/>
            <person name="Barry K."/>
            <person name="Detter J.C."/>
            <person name="Glavina del Rio T."/>
            <person name="Hammon N."/>
            <person name="Israni S."/>
            <person name="Dalin E."/>
            <person name="Tice H."/>
            <person name="Pitluck S."/>
            <person name="Thompson L.S."/>
            <person name="Brettin T."/>
            <person name="Bruce D."/>
            <person name="Han C."/>
            <person name="Tapia R."/>
            <person name="Schmutz J."/>
            <person name="Larimer F."/>
            <person name="Land M."/>
            <person name="Hauser L."/>
            <person name="Kyrpides N."/>
            <person name="Kim E."/>
            <person name="Mattes T."/>
            <person name="Gossett J."/>
            <person name="Richardson P."/>
        </authorList>
    </citation>
    <scope>NUCLEOTIDE SEQUENCE [LARGE SCALE GENOMIC DNA]</scope>
    <source>
        <strain>ATCC BAA-499 / JS614</strain>
    </source>
</reference>
<sequence>MAGGDREKALDAALANIEKQFGKGSVMRLGDEVRAPLEIIPSGSIALDVALGLGGFPRGRVVEIYGPESSGKTTVALHAVANAQRAGGIVAFIDAEHALDPDYAKNLGVDTDALLVSQPDSGEQALEIADMLIRSGALDLIVIDSVAALVPRAEIEGEMGDSHVGLQARLMSQALRKMTGALNNSKTTMIFINQLREKIGVMFGSPETTTGGKALKFYASVRLDVRRIETLKDGTDMVGNRTRVKVVKNKVAPPFKQAEFDIMYGKGISREGGLIDVGVEAGLVRKAGAWYTYEGDQLGQGKENARAFLRDNPDLANELEKKILEKLGVGPTVDQDVAELPAEPIGVGDF</sequence>
<evidence type="ECO:0000255" key="1">
    <source>
        <dbReference type="HAMAP-Rule" id="MF_00268"/>
    </source>
</evidence>
<comment type="function">
    <text evidence="1">Can catalyze the hydrolysis of ATP in the presence of single-stranded DNA, the ATP-dependent uptake of single-stranded DNA by duplex DNA, and the ATP-dependent hybridization of homologous single-stranded DNAs. It interacts with LexA causing its activation and leading to its autocatalytic cleavage.</text>
</comment>
<comment type="subcellular location">
    <subcellularLocation>
        <location evidence="1">Cytoplasm</location>
    </subcellularLocation>
</comment>
<comment type="similarity">
    <text evidence="1">Belongs to the RecA family.</text>
</comment>
<gene>
    <name evidence="1" type="primary">recA</name>
    <name type="ordered locus">Noca_2341</name>
</gene>
<dbReference type="EMBL" id="CP000509">
    <property type="protein sequence ID" value="ABL81846.1"/>
    <property type="molecule type" value="Genomic_DNA"/>
</dbReference>
<dbReference type="RefSeq" id="WP_011755788.1">
    <property type="nucleotide sequence ID" value="NC_008699.1"/>
</dbReference>
<dbReference type="SMR" id="A1SJ61"/>
<dbReference type="STRING" id="196162.Noca_2341"/>
<dbReference type="KEGG" id="nca:Noca_2341"/>
<dbReference type="eggNOG" id="COG0468">
    <property type="taxonomic scope" value="Bacteria"/>
</dbReference>
<dbReference type="HOGENOM" id="CLU_040469_3_2_11"/>
<dbReference type="OrthoDB" id="9776733at2"/>
<dbReference type="Proteomes" id="UP000000640">
    <property type="component" value="Chromosome"/>
</dbReference>
<dbReference type="GO" id="GO:0005829">
    <property type="term" value="C:cytosol"/>
    <property type="evidence" value="ECO:0007669"/>
    <property type="project" value="TreeGrafter"/>
</dbReference>
<dbReference type="GO" id="GO:0005524">
    <property type="term" value="F:ATP binding"/>
    <property type="evidence" value="ECO:0007669"/>
    <property type="project" value="UniProtKB-UniRule"/>
</dbReference>
<dbReference type="GO" id="GO:0016887">
    <property type="term" value="F:ATP hydrolysis activity"/>
    <property type="evidence" value="ECO:0007669"/>
    <property type="project" value="InterPro"/>
</dbReference>
<dbReference type="GO" id="GO:0140664">
    <property type="term" value="F:ATP-dependent DNA damage sensor activity"/>
    <property type="evidence" value="ECO:0007669"/>
    <property type="project" value="InterPro"/>
</dbReference>
<dbReference type="GO" id="GO:0003684">
    <property type="term" value="F:damaged DNA binding"/>
    <property type="evidence" value="ECO:0007669"/>
    <property type="project" value="UniProtKB-UniRule"/>
</dbReference>
<dbReference type="GO" id="GO:0003697">
    <property type="term" value="F:single-stranded DNA binding"/>
    <property type="evidence" value="ECO:0007669"/>
    <property type="project" value="UniProtKB-UniRule"/>
</dbReference>
<dbReference type="GO" id="GO:0006310">
    <property type="term" value="P:DNA recombination"/>
    <property type="evidence" value="ECO:0007669"/>
    <property type="project" value="UniProtKB-UniRule"/>
</dbReference>
<dbReference type="GO" id="GO:0006281">
    <property type="term" value="P:DNA repair"/>
    <property type="evidence" value="ECO:0007669"/>
    <property type="project" value="UniProtKB-UniRule"/>
</dbReference>
<dbReference type="GO" id="GO:0009432">
    <property type="term" value="P:SOS response"/>
    <property type="evidence" value="ECO:0007669"/>
    <property type="project" value="UniProtKB-UniRule"/>
</dbReference>
<dbReference type="CDD" id="cd00983">
    <property type="entry name" value="RecA"/>
    <property type="match status" value="1"/>
</dbReference>
<dbReference type="FunFam" id="3.40.50.300:FF:000087">
    <property type="entry name" value="Recombinase RecA"/>
    <property type="match status" value="1"/>
</dbReference>
<dbReference type="Gene3D" id="3.40.50.300">
    <property type="entry name" value="P-loop containing nucleotide triphosphate hydrolases"/>
    <property type="match status" value="1"/>
</dbReference>
<dbReference type="HAMAP" id="MF_00268">
    <property type="entry name" value="RecA"/>
    <property type="match status" value="1"/>
</dbReference>
<dbReference type="InterPro" id="IPR003593">
    <property type="entry name" value="AAA+_ATPase"/>
</dbReference>
<dbReference type="InterPro" id="IPR013765">
    <property type="entry name" value="DNA_recomb/repair_RecA"/>
</dbReference>
<dbReference type="InterPro" id="IPR020584">
    <property type="entry name" value="DNA_recomb/repair_RecA_CS"/>
</dbReference>
<dbReference type="InterPro" id="IPR027417">
    <property type="entry name" value="P-loop_NTPase"/>
</dbReference>
<dbReference type="InterPro" id="IPR049261">
    <property type="entry name" value="RecA-like_C"/>
</dbReference>
<dbReference type="InterPro" id="IPR049428">
    <property type="entry name" value="RecA-like_N"/>
</dbReference>
<dbReference type="InterPro" id="IPR020588">
    <property type="entry name" value="RecA_ATP-bd"/>
</dbReference>
<dbReference type="InterPro" id="IPR023400">
    <property type="entry name" value="RecA_C_sf"/>
</dbReference>
<dbReference type="InterPro" id="IPR020587">
    <property type="entry name" value="RecA_monomer-monomer_interface"/>
</dbReference>
<dbReference type="NCBIfam" id="TIGR02012">
    <property type="entry name" value="tigrfam_recA"/>
    <property type="match status" value="1"/>
</dbReference>
<dbReference type="PANTHER" id="PTHR45900:SF1">
    <property type="entry name" value="MITOCHONDRIAL DNA REPAIR PROTEIN RECA HOMOLOG-RELATED"/>
    <property type="match status" value="1"/>
</dbReference>
<dbReference type="PANTHER" id="PTHR45900">
    <property type="entry name" value="RECA"/>
    <property type="match status" value="1"/>
</dbReference>
<dbReference type="Pfam" id="PF00154">
    <property type="entry name" value="RecA"/>
    <property type="match status" value="1"/>
</dbReference>
<dbReference type="Pfam" id="PF21096">
    <property type="entry name" value="RecA_C"/>
    <property type="match status" value="1"/>
</dbReference>
<dbReference type="PRINTS" id="PR00142">
    <property type="entry name" value="RECA"/>
</dbReference>
<dbReference type="SMART" id="SM00382">
    <property type="entry name" value="AAA"/>
    <property type="match status" value="1"/>
</dbReference>
<dbReference type="SUPFAM" id="SSF52540">
    <property type="entry name" value="P-loop containing nucleoside triphosphate hydrolases"/>
    <property type="match status" value="1"/>
</dbReference>
<dbReference type="SUPFAM" id="SSF54752">
    <property type="entry name" value="RecA protein, C-terminal domain"/>
    <property type="match status" value="1"/>
</dbReference>
<dbReference type="PROSITE" id="PS00321">
    <property type="entry name" value="RECA_1"/>
    <property type="match status" value="1"/>
</dbReference>
<dbReference type="PROSITE" id="PS50162">
    <property type="entry name" value="RECA_2"/>
    <property type="match status" value="1"/>
</dbReference>
<dbReference type="PROSITE" id="PS50163">
    <property type="entry name" value="RECA_3"/>
    <property type="match status" value="1"/>
</dbReference>
<organism>
    <name type="scientific">Nocardioides sp. (strain ATCC BAA-499 / JS614)</name>
    <dbReference type="NCBI Taxonomy" id="196162"/>
    <lineage>
        <taxon>Bacteria</taxon>
        <taxon>Bacillati</taxon>
        <taxon>Actinomycetota</taxon>
        <taxon>Actinomycetes</taxon>
        <taxon>Propionibacteriales</taxon>
        <taxon>Nocardioidaceae</taxon>
        <taxon>Nocardioides</taxon>
    </lineage>
</organism>
<proteinExistence type="inferred from homology"/>